<name>SECA1_MYCBO</name>
<accession>P0A5Y9</accession>
<accession>A0A1R3Y3Q2</accession>
<accession>O05885</accession>
<accession>P71494</accession>
<accession>X2BNE8</accession>
<organism>
    <name type="scientific">Mycobacterium bovis (strain ATCC BAA-935 / AF2122/97)</name>
    <dbReference type="NCBI Taxonomy" id="233413"/>
    <lineage>
        <taxon>Bacteria</taxon>
        <taxon>Bacillati</taxon>
        <taxon>Actinomycetota</taxon>
        <taxon>Actinomycetes</taxon>
        <taxon>Mycobacteriales</taxon>
        <taxon>Mycobacteriaceae</taxon>
        <taxon>Mycobacterium</taxon>
        <taxon>Mycobacterium tuberculosis complex</taxon>
    </lineage>
</organism>
<feature type="chain" id="PRO_0000109591" description="Protein translocase subunit SecA 1">
    <location>
        <begin position="1"/>
        <end position="949"/>
    </location>
</feature>
<feature type="region of interest" description="Disordered" evidence="2">
    <location>
        <begin position="869"/>
        <end position="949"/>
    </location>
</feature>
<feature type="compositionally biased region" description="Basic and acidic residues" evidence="2">
    <location>
        <begin position="925"/>
        <end position="934"/>
    </location>
</feature>
<feature type="binding site" evidence="1">
    <location>
        <position position="86"/>
    </location>
    <ligand>
        <name>ATP</name>
        <dbReference type="ChEBI" id="CHEBI:30616"/>
    </ligand>
</feature>
<feature type="binding site" evidence="1">
    <location>
        <begin position="104"/>
        <end position="108"/>
    </location>
    <ligand>
        <name>ATP</name>
        <dbReference type="ChEBI" id="CHEBI:30616"/>
    </ligand>
</feature>
<feature type="binding site" evidence="1">
    <location>
        <position position="493"/>
    </location>
    <ligand>
        <name>ATP</name>
        <dbReference type="ChEBI" id="CHEBI:30616"/>
    </ligand>
</feature>
<feature type="mutagenesis site" description="Azide resistant." evidence="3">
    <original>T</original>
    <variation>I</variation>
    <location>
        <position position="129"/>
    </location>
</feature>
<feature type="sequence conflict" description="In Ref. 1; AAC34131." evidence="4" ref="1">
    <original>ASNWYTEFA</original>
    <variation>LQLVHRVR</variation>
    <location>
        <begin position="231"/>
        <end position="239"/>
    </location>
</feature>
<feature type="sequence conflict" description="In Ref. 1; AAC34131." evidence="4" ref="1">
    <original>MH</original>
    <variation>ID</variation>
    <location>
        <begin position="334"/>
        <end position="335"/>
    </location>
</feature>
<feature type="sequence conflict" description="In Ref. 1; AAC34131." evidence="4" ref="1">
    <original>V</original>
    <variation>E</variation>
    <location>
        <position position="711"/>
    </location>
</feature>
<feature type="sequence conflict" description="In Ref. 1; AAC34131." evidence="4" ref="1">
    <original>QR</original>
    <variation>HG</variation>
    <location>
        <begin position="800"/>
        <end position="801"/>
    </location>
</feature>
<feature type="sequence conflict" description="In Ref. 1; AAC34131." evidence="4" ref="1">
    <original>A</original>
    <variation>R</variation>
    <location>
        <position position="932"/>
    </location>
</feature>
<reference key="1">
    <citation type="journal article" date="2001" name="J. Bacteriol.">
        <title>Two nonredundant SecA homologues function in mycobacteria.</title>
        <authorList>
            <person name="Braunstein M."/>
            <person name="Brown A.M."/>
            <person name="Kurtz S."/>
            <person name="Jacobs W.R. Jr."/>
        </authorList>
    </citation>
    <scope>NUCLEOTIDE SEQUENCE [GENOMIC DNA]</scope>
    <scope>MUTAGENESIS OF THR-129</scope>
    <source>
        <strain>BCG</strain>
    </source>
</reference>
<reference key="2">
    <citation type="journal article" date="2003" name="Proc. Natl. Acad. Sci. U.S.A.">
        <title>The complete genome sequence of Mycobacterium bovis.</title>
        <authorList>
            <person name="Garnier T."/>
            <person name="Eiglmeier K."/>
            <person name="Camus J.-C."/>
            <person name="Medina N."/>
            <person name="Mansoor H."/>
            <person name="Pryor M."/>
            <person name="Duthoy S."/>
            <person name="Grondin S."/>
            <person name="Lacroix C."/>
            <person name="Monsempe C."/>
            <person name="Simon S."/>
            <person name="Harris B."/>
            <person name="Atkin R."/>
            <person name="Doggett J."/>
            <person name="Mayes R."/>
            <person name="Keating L."/>
            <person name="Wheeler P.R."/>
            <person name="Parkhill J."/>
            <person name="Barrell B.G."/>
            <person name="Cole S.T."/>
            <person name="Gordon S.V."/>
            <person name="Hewinson R.G."/>
        </authorList>
    </citation>
    <scope>NUCLEOTIDE SEQUENCE [LARGE SCALE GENOMIC DNA]</scope>
    <source>
        <strain>ATCC BAA-935 / AF2122/97</strain>
    </source>
</reference>
<reference key="3">
    <citation type="journal article" date="2017" name="Genome Announc.">
        <title>Updated reference genome sequence and annotation of Mycobacterium bovis AF2122/97.</title>
        <authorList>
            <person name="Malone K.M."/>
            <person name="Farrell D."/>
            <person name="Stuber T.P."/>
            <person name="Schubert O.T."/>
            <person name="Aebersold R."/>
            <person name="Robbe-Austerman S."/>
            <person name="Gordon S.V."/>
        </authorList>
    </citation>
    <scope>NUCLEOTIDE SEQUENCE [LARGE SCALE GENOMIC DNA]</scope>
    <scope>GENOME REANNOTATION</scope>
    <source>
        <strain>ATCC BAA-935 / AF2122/97</strain>
    </source>
</reference>
<keyword id="KW-0067">ATP-binding</keyword>
<keyword id="KW-1003">Cell membrane</keyword>
<keyword id="KW-0963">Cytoplasm</keyword>
<keyword id="KW-0472">Membrane</keyword>
<keyword id="KW-0547">Nucleotide-binding</keyword>
<keyword id="KW-0653">Protein transport</keyword>
<keyword id="KW-1185">Reference proteome</keyword>
<keyword id="KW-1278">Translocase</keyword>
<keyword id="KW-0811">Translocation</keyword>
<keyword id="KW-0813">Transport</keyword>
<proteinExistence type="evidence at protein level"/>
<dbReference type="EC" id="7.4.2.8" evidence="1"/>
<dbReference type="EMBL" id="U66080">
    <property type="protein sequence ID" value="AAC34131.1"/>
    <property type="molecule type" value="Genomic_DNA"/>
</dbReference>
<dbReference type="EMBL" id="LT708304">
    <property type="protein sequence ID" value="SIU01897.1"/>
    <property type="molecule type" value="Genomic_DNA"/>
</dbReference>
<dbReference type="RefSeq" id="NP_856913.1">
    <property type="nucleotide sequence ID" value="NC_002945.3"/>
</dbReference>
<dbReference type="SMR" id="P0A5Y9"/>
<dbReference type="KEGG" id="mbo:BQ2027_MB3268C"/>
<dbReference type="PATRIC" id="fig|233413.5.peg.3595"/>
<dbReference type="Proteomes" id="UP000001419">
    <property type="component" value="Chromosome"/>
</dbReference>
<dbReference type="GO" id="GO:0031522">
    <property type="term" value="C:cell envelope Sec protein transport complex"/>
    <property type="evidence" value="ECO:0007669"/>
    <property type="project" value="TreeGrafter"/>
</dbReference>
<dbReference type="GO" id="GO:0005829">
    <property type="term" value="C:cytosol"/>
    <property type="evidence" value="ECO:0007669"/>
    <property type="project" value="TreeGrafter"/>
</dbReference>
<dbReference type="GO" id="GO:0005886">
    <property type="term" value="C:plasma membrane"/>
    <property type="evidence" value="ECO:0007669"/>
    <property type="project" value="UniProtKB-SubCell"/>
</dbReference>
<dbReference type="GO" id="GO:0005524">
    <property type="term" value="F:ATP binding"/>
    <property type="evidence" value="ECO:0007669"/>
    <property type="project" value="UniProtKB-UniRule"/>
</dbReference>
<dbReference type="GO" id="GO:0008564">
    <property type="term" value="F:protein-exporting ATPase activity"/>
    <property type="evidence" value="ECO:0007669"/>
    <property type="project" value="UniProtKB-EC"/>
</dbReference>
<dbReference type="GO" id="GO:0065002">
    <property type="term" value="P:intracellular protein transmembrane transport"/>
    <property type="evidence" value="ECO:0007669"/>
    <property type="project" value="UniProtKB-UniRule"/>
</dbReference>
<dbReference type="GO" id="GO:0017038">
    <property type="term" value="P:protein import"/>
    <property type="evidence" value="ECO:0007669"/>
    <property type="project" value="InterPro"/>
</dbReference>
<dbReference type="GO" id="GO:0006605">
    <property type="term" value="P:protein targeting"/>
    <property type="evidence" value="ECO:0007669"/>
    <property type="project" value="UniProtKB-UniRule"/>
</dbReference>
<dbReference type="GO" id="GO:0043952">
    <property type="term" value="P:protein transport by the Sec complex"/>
    <property type="evidence" value="ECO:0007669"/>
    <property type="project" value="TreeGrafter"/>
</dbReference>
<dbReference type="CDD" id="cd17928">
    <property type="entry name" value="DEXDc_SecA"/>
    <property type="match status" value="1"/>
</dbReference>
<dbReference type="CDD" id="cd18803">
    <property type="entry name" value="SF2_C_secA"/>
    <property type="match status" value="1"/>
</dbReference>
<dbReference type="FunFam" id="1.10.3060.10:FF:000002">
    <property type="entry name" value="Preprotein translocase subunit SecA"/>
    <property type="match status" value="1"/>
</dbReference>
<dbReference type="FunFam" id="3.40.50.300:FF:000113">
    <property type="entry name" value="Preprotein translocase subunit SecA"/>
    <property type="match status" value="1"/>
</dbReference>
<dbReference type="FunFam" id="3.40.50.300:FF:000334">
    <property type="entry name" value="Protein translocase subunit SecA"/>
    <property type="match status" value="1"/>
</dbReference>
<dbReference type="FunFam" id="3.90.1440.10:FF:000002">
    <property type="entry name" value="Protein translocase subunit SecA"/>
    <property type="match status" value="1"/>
</dbReference>
<dbReference type="Gene3D" id="1.10.3060.10">
    <property type="entry name" value="Helical scaffold and wing domains of SecA"/>
    <property type="match status" value="1"/>
</dbReference>
<dbReference type="Gene3D" id="3.40.50.300">
    <property type="entry name" value="P-loop containing nucleotide triphosphate hydrolases"/>
    <property type="match status" value="2"/>
</dbReference>
<dbReference type="Gene3D" id="3.90.1440.10">
    <property type="entry name" value="SecA, preprotein cross-linking domain"/>
    <property type="match status" value="1"/>
</dbReference>
<dbReference type="HAMAP" id="MF_01382">
    <property type="entry name" value="SecA"/>
    <property type="match status" value="1"/>
</dbReference>
<dbReference type="InterPro" id="IPR014001">
    <property type="entry name" value="Helicase_ATP-bd"/>
</dbReference>
<dbReference type="InterPro" id="IPR001650">
    <property type="entry name" value="Helicase_C-like"/>
</dbReference>
<dbReference type="InterPro" id="IPR027417">
    <property type="entry name" value="P-loop_NTPase"/>
</dbReference>
<dbReference type="InterPro" id="IPR000185">
    <property type="entry name" value="SecA"/>
</dbReference>
<dbReference type="InterPro" id="IPR020937">
    <property type="entry name" value="SecA_CS"/>
</dbReference>
<dbReference type="InterPro" id="IPR011115">
    <property type="entry name" value="SecA_DEAD"/>
</dbReference>
<dbReference type="InterPro" id="IPR014018">
    <property type="entry name" value="SecA_motor_DEAD"/>
</dbReference>
<dbReference type="InterPro" id="IPR011130">
    <property type="entry name" value="SecA_preprotein_X-link_dom"/>
</dbReference>
<dbReference type="InterPro" id="IPR044722">
    <property type="entry name" value="SecA_SF2_C"/>
</dbReference>
<dbReference type="InterPro" id="IPR011116">
    <property type="entry name" value="SecA_Wing/Scaffold"/>
</dbReference>
<dbReference type="InterPro" id="IPR036266">
    <property type="entry name" value="SecA_Wing/Scaffold_sf"/>
</dbReference>
<dbReference type="InterPro" id="IPR036670">
    <property type="entry name" value="SecA_X-link_sf"/>
</dbReference>
<dbReference type="NCBIfam" id="NF009538">
    <property type="entry name" value="PRK12904.1"/>
    <property type="match status" value="1"/>
</dbReference>
<dbReference type="NCBIfam" id="TIGR00963">
    <property type="entry name" value="secA"/>
    <property type="match status" value="1"/>
</dbReference>
<dbReference type="PANTHER" id="PTHR30612:SF0">
    <property type="entry name" value="CHLOROPLAST PROTEIN-TRANSPORTING ATPASE"/>
    <property type="match status" value="1"/>
</dbReference>
<dbReference type="PANTHER" id="PTHR30612">
    <property type="entry name" value="SECA INNER MEMBRANE COMPONENT OF SEC PROTEIN SECRETION SYSTEM"/>
    <property type="match status" value="1"/>
</dbReference>
<dbReference type="Pfam" id="PF21090">
    <property type="entry name" value="P-loop_SecA"/>
    <property type="match status" value="1"/>
</dbReference>
<dbReference type="Pfam" id="PF07517">
    <property type="entry name" value="SecA_DEAD"/>
    <property type="match status" value="1"/>
</dbReference>
<dbReference type="Pfam" id="PF01043">
    <property type="entry name" value="SecA_PP_bind"/>
    <property type="match status" value="1"/>
</dbReference>
<dbReference type="Pfam" id="PF07516">
    <property type="entry name" value="SecA_SW"/>
    <property type="match status" value="1"/>
</dbReference>
<dbReference type="PRINTS" id="PR00906">
    <property type="entry name" value="SECA"/>
</dbReference>
<dbReference type="SMART" id="SM00957">
    <property type="entry name" value="SecA_DEAD"/>
    <property type="match status" value="1"/>
</dbReference>
<dbReference type="SMART" id="SM00958">
    <property type="entry name" value="SecA_PP_bind"/>
    <property type="match status" value="1"/>
</dbReference>
<dbReference type="SUPFAM" id="SSF81886">
    <property type="entry name" value="Helical scaffold and wing domains of SecA"/>
    <property type="match status" value="1"/>
</dbReference>
<dbReference type="SUPFAM" id="SSF52540">
    <property type="entry name" value="P-loop containing nucleoside triphosphate hydrolases"/>
    <property type="match status" value="2"/>
</dbReference>
<dbReference type="SUPFAM" id="SSF81767">
    <property type="entry name" value="Pre-protein crosslinking domain of SecA"/>
    <property type="match status" value="1"/>
</dbReference>
<dbReference type="PROSITE" id="PS01312">
    <property type="entry name" value="SECA"/>
    <property type="match status" value="1"/>
</dbReference>
<dbReference type="PROSITE" id="PS51196">
    <property type="entry name" value="SECA_MOTOR_DEAD"/>
    <property type="match status" value="1"/>
</dbReference>
<evidence type="ECO:0000255" key="1">
    <source>
        <dbReference type="HAMAP-Rule" id="MF_01382"/>
    </source>
</evidence>
<evidence type="ECO:0000256" key="2">
    <source>
        <dbReference type="SAM" id="MobiDB-lite"/>
    </source>
</evidence>
<evidence type="ECO:0000269" key="3">
    <source>
    </source>
</evidence>
<evidence type="ECO:0000305" key="4"/>
<comment type="function">
    <text evidence="1">Part of the Sec protein translocase complex. Interacts with the SecYEG preprotein conducting channel. Has a central role in coupling the hydrolysis of ATP to the transfer of proteins into and across the cell membrane, serving as an ATP-driven molecular motor driving the stepwise translocation of polypeptide chains across the membrane.</text>
</comment>
<comment type="catalytic activity">
    <reaction evidence="1">
        <text>ATP + H2O + cellular proteinSide 1 = ADP + phosphate + cellular proteinSide 2.</text>
        <dbReference type="EC" id="7.4.2.8"/>
    </reaction>
</comment>
<comment type="subunit">
    <text evidence="1">Monomer and homodimer. Part of the essential Sec protein translocation apparatus which comprises SecA, SecYEG and auxiliary proteins SecDF. Other proteins may also be involved.</text>
</comment>
<comment type="subcellular location">
    <subcellularLocation>
        <location evidence="1">Cell membrane</location>
        <topology evidence="1">Peripheral membrane protein</topology>
        <orientation evidence="1">Cytoplasmic side</orientation>
    </subcellularLocation>
    <subcellularLocation>
        <location evidence="1">Cytoplasm</location>
    </subcellularLocation>
    <text evidence="1">Distribution is 50-50.</text>
</comment>
<comment type="similarity">
    <text evidence="1">Belongs to the SecA family.</text>
</comment>
<gene>
    <name evidence="1" type="primary">secA1</name>
    <name type="ordered locus">BQ2027_MB3268C</name>
</gene>
<sequence length="949" mass="106022">MLSKLLRLGEGRMVKRLKKVADYVGTLSDDVEKLTDAELRAKTDEFKRRLADQKNPETLDDLLPEAFAVAREAAWRVLDQRPFDVQVMGAAALHLGNVAEMKTGEGKTLTCVLPAYLNALAGNGVHIVTVNDYLAKRDSEWMGRVHRFLGLQVGVILATMTPDERRVAYNADITYGTNNEFGFDYLRDNMAHSLDDLVQRGHHYAIVDEVDSILIDEARTPLIISGPADGASNWYTEFARLAPLMEKDVHYEVDLRKRTVGVHEKGVEFVEDQLGIDNLYEAANSPLVSYLNNALKAKELFSRDKDYIVRDGEVLIVDEFTGRVLIGRRYNEGMHQAIEAKEHVEIKAENQTLATITLQNYFRLYDKLAGMTGTAQTEAAELHEIYKLGVVSIPTNMPMIREDQSDLIYKTEEAKYIAVVDDVAERYAKGQPVLIGTTSVERSEYLSRQFTKRRIPHNVLNAKYHEQEATIIAVAGRRGGVTVATNMAGRGTDIVLGGNVDFLTDQRLRERGLDPVETPEEYEAAWHSELPIVKEEASKEAKEVIEAGGLYVLGTERHESRRIDNQLRGRSGRQGDPGESRFYLSLGDELMRRFNGAALETLLTRLNLPDDVPIEAKMVTRAIKSAQTQVEQQNFEVRKNVLKYDEVMNQQRKVIYAERRRILEGENLKDQALDMVRDVITAYVDGATGEGYAEDWDLDALWTALKTLYPVGITADSLTRKDHEFERDDLTREELLEALLKDAERAYAAREAELEEIAGEGAMRQLERNVLLNVIDRKWREHLYEMDYLKEGIGLRAMAQRDPLVEYQREGYDMFMAMLDGMKEESVGFLFNVTVEAVPAPPVAPAAEPAELAEFAAAAAAAAQQRSAVDGGARERAPSALRAKGVASESPALTYSGPAEDGSAQVQRNGGGAHKTPAGVPAGASRRERREAARRQGRGAKPPKSVKKR</sequence>
<protein>
    <recommendedName>
        <fullName evidence="1">Protein translocase subunit SecA 1</fullName>
        <ecNumber evidence="1">7.4.2.8</ecNumber>
    </recommendedName>
</protein>